<reference evidence="4" key="1">
    <citation type="journal article" date="2005" name="Toxicon">
        <title>Mass spectrometric and high performance liquid chromatography profiling of the venom of the Brazilian vermivorous mollusk Conus regius: feeding behavior and identification of one novel conotoxin.</title>
        <authorList>
            <person name="Vianna Braga M.C."/>
            <person name="Konno K."/>
            <person name="Portaro F.C.V."/>
            <person name="Carlos de Freitas J."/>
            <person name="Yamane T."/>
            <person name="Olivera B.M."/>
            <person name="Pimenta D.C."/>
        </authorList>
    </citation>
    <scope>PROTEIN SEQUENCE</scope>
    <scope>FUNCTION</scope>
    <scope>SUBCELLULAR LOCATION</scope>
    <scope>TISSUE SPECIFICITY</scope>
    <scope>MASS SPECTROMETRY</scope>
    <source>
        <tissue evidence="2">Venom</tissue>
    </source>
</reference>
<reference evidence="4" key="2">
    <citation type="submission" date="2004-09" db="UniProtKB">
        <authorList>
            <person name="Pimenta D.C."/>
        </authorList>
    </citation>
    <scope>FUNCTION</scope>
    <source>
        <tissue>Venom</tissue>
    </source>
</reference>
<keyword id="KW-0903">Direct protein sequencing</keyword>
<keyword id="KW-1015">Disulfide bond</keyword>
<keyword id="KW-0528">Neurotoxin</keyword>
<keyword id="KW-0964">Secreted</keyword>
<keyword id="KW-0800">Toxin</keyword>
<evidence type="ECO:0000250" key="1">
    <source>
        <dbReference type="UniProtKB" id="Q7Z094"/>
    </source>
</evidence>
<evidence type="ECO:0000269" key="2">
    <source>
    </source>
</evidence>
<evidence type="ECO:0000269" key="3">
    <source ref="2"/>
</evidence>
<evidence type="ECO:0000305" key="4"/>
<dbReference type="ConoServer" id="1508">
    <property type="toxin name" value="RgXIA"/>
</dbReference>
<dbReference type="GO" id="GO:0005576">
    <property type="term" value="C:extracellular region"/>
    <property type="evidence" value="ECO:0007669"/>
    <property type="project" value="UniProtKB-SubCell"/>
</dbReference>
<dbReference type="GO" id="GO:0090729">
    <property type="term" value="F:toxin activity"/>
    <property type="evidence" value="ECO:0007669"/>
    <property type="project" value="UniProtKB-KW"/>
</dbReference>
<accession>P84197</accession>
<protein>
    <recommendedName>
        <fullName>Conotoxin Rg11a</fullName>
    </recommendedName>
</protein>
<name>I1BA_CONRE</name>
<organism>
    <name type="scientific">Conus regius</name>
    <name type="common">Crown cone</name>
    <dbReference type="NCBI Taxonomy" id="101314"/>
    <lineage>
        <taxon>Eukaryota</taxon>
        <taxon>Metazoa</taxon>
        <taxon>Spiralia</taxon>
        <taxon>Lophotrochozoa</taxon>
        <taxon>Mollusca</taxon>
        <taxon>Gastropoda</taxon>
        <taxon>Caenogastropoda</taxon>
        <taxon>Neogastropoda</taxon>
        <taxon>Conoidea</taxon>
        <taxon>Conidae</taxon>
        <taxon>Conus</taxon>
        <taxon>Stephanoconus</taxon>
    </lineage>
</organism>
<feature type="chain" id="PRO_0000086876" description="Conotoxin Rg11a">
    <location>
        <begin position="1"/>
        <end position="44"/>
    </location>
</feature>
<feature type="disulfide bond" evidence="1">
    <location>
        <begin position="1"/>
        <end position="15"/>
    </location>
</feature>
<feature type="disulfide bond" evidence="1">
    <location>
        <begin position="8"/>
        <end position="22"/>
    </location>
</feature>
<feature type="disulfide bond" evidence="1">
    <location>
        <begin position="14"/>
        <end position="30"/>
    </location>
</feature>
<feature type="disulfide bond" evidence="1">
    <location>
        <begin position="21"/>
        <end position="36"/>
    </location>
</feature>
<sequence length="44" mass="4703">CQAYGESCSAVVRCCDPNAVCCQYPEDAVCVTRGYCRPPATVLT</sequence>
<comment type="function">
    <text evidence="2 3">Neurotoxin. Elicits hypersensibility when injected intracranially in mice. May act via potassium channel currents.</text>
</comment>
<comment type="subcellular location">
    <subcellularLocation>
        <location evidence="2">Secreted</location>
    </subcellularLocation>
</comment>
<comment type="tissue specificity">
    <text evidence="2">Expressed by the venom duct.</text>
</comment>
<comment type="domain">
    <text>The cysteine framework is XI (C-C-CC-CC-C-C).</text>
</comment>
<comment type="mass spectrometry" mass="4695.61" method="MALDI" evidence="2"/>
<comment type="similarity">
    <text evidence="4">Belongs to the conotoxin I1 superfamily.</text>
</comment>
<proteinExistence type="evidence at protein level"/>